<dbReference type="EC" id="3.1.11.-"/>
<dbReference type="EMBL" id="EF680279">
    <property type="protein sequence ID" value="ABS71854.1"/>
    <property type="molecule type" value="mRNA"/>
</dbReference>
<dbReference type="EMBL" id="EF680280">
    <property type="protein sequence ID" value="ABS71855.1"/>
    <property type="molecule type" value="mRNA"/>
</dbReference>
<dbReference type="EMBL" id="AE014297">
    <property type="protein sequence ID" value="AAF55541.2"/>
    <property type="molecule type" value="Genomic_DNA"/>
</dbReference>
<dbReference type="EMBL" id="AY051647">
    <property type="protein sequence ID" value="AAK93071.1"/>
    <property type="molecule type" value="mRNA"/>
</dbReference>
<dbReference type="EMBL" id="BT050502">
    <property type="protein sequence ID" value="ACJ13209.1"/>
    <property type="status" value="ALT_INIT"/>
    <property type="molecule type" value="mRNA"/>
</dbReference>
<dbReference type="RefSeq" id="NP_001163646.1">
    <property type="nucleotide sequence ID" value="NM_001170175.2"/>
</dbReference>
<dbReference type="RefSeq" id="NP_650715.3">
    <property type="nucleotide sequence ID" value="NM_142458.4"/>
</dbReference>
<dbReference type="SMR" id="Q9VE86"/>
<dbReference type="BioGRID" id="67224">
    <property type="interactions" value="6"/>
</dbReference>
<dbReference type="FunCoup" id="Q9VE86">
    <property type="interactions" value="371"/>
</dbReference>
<dbReference type="IntAct" id="Q9VE86">
    <property type="interactions" value="3"/>
</dbReference>
<dbReference type="STRING" id="7227.FBpp0291513"/>
<dbReference type="iPTMnet" id="Q9VE86"/>
<dbReference type="PaxDb" id="7227-FBpp0291513"/>
<dbReference type="DNASU" id="42208"/>
<dbReference type="EnsemblMetazoa" id="FBtr0083586">
    <property type="protein sequence ID" value="FBpp0083007"/>
    <property type="gene ID" value="FBgn0038608"/>
</dbReference>
<dbReference type="GeneID" id="42208"/>
<dbReference type="KEGG" id="dme:Dmel_CG7670"/>
<dbReference type="UCSC" id="CG7670-RA">
    <property type="organism name" value="d. melanogaster"/>
</dbReference>
<dbReference type="AGR" id="FB:FBgn0038608"/>
<dbReference type="CTD" id="42208"/>
<dbReference type="FlyBase" id="FBgn0038608">
    <property type="gene designation" value="WRNexo"/>
</dbReference>
<dbReference type="VEuPathDB" id="VectorBase:FBgn0038608"/>
<dbReference type="eggNOG" id="KOG4373">
    <property type="taxonomic scope" value="Eukaryota"/>
</dbReference>
<dbReference type="InParanoid" id="Q9VE86"/>
<dbReference type="OrthoDB" id="10261556at2759"/>
<dbReference type="PhylomeDB" id="Q9VE86"/>
<dbReference type="BioGRID-ORCS" id="42208">
    <property type="hits" value="0 hits in 1 CRISPR screen"/>
</dbReference>
<dbReference type="ChiTaRS" id="WRNexo">
    <property type="organism name" value="fly"/>
</dbReference>
<dbReference type="GenomeRNAi" id="42208"/>
<dbReference type="PRO" id="PR:Q9VE86"/>
<dbReference type="Proteomes" id="UP000000803">
    <property type="component" value="Chromosome 3R"/>
</dbReference>
<dbReference type="Bgee" id="FBgn0038608">
    <property type="expression patterns" value="Expressed in secondary oocyte and 38 other cell types or tissues"/>
</dbReference>
<dbReference type="ExpressionAtlas" id="Q9VE86">
    <property type="expression patterns" value="baseline and differential"/>
</dbReference>
<dbReference type="GO" id="GO:0005634">
    <property type="term" value="C:nucleus"/>
    <property type="evidence" value="ECO:0000314"/>
    <property type="project" value="UniProtKB"/>
</dbReference>
<dbReference type="GO" id="GO:0008408">
    <property type="term" value="F:3'-5' exonuclease activity"/>
    <property type="evidence" value="ECO:0000315"/>
    <property type="project" value="UniProtKB"/>
</dbReference>
<dbReference type="GO" id="GO:0008311">
    <property type="term" value="F:double-stranded DNA 3'-5' DNA exonuclease activity"/>
    <property type="evidence" value="ECO:0000314"/>
    <property type="project" value="FlyBase"/>
</dbReference>
<dbReference type="GO" id="GO:0046872">
    <property type="term" value="F:metal ion binding"/>
    <property type="evidence" value="ECO:0007669"/>
    <property type="project" value="UniProtKB-KW"/>
</dbReference>
<dbReference type="GO" id="GO:0003676">
    <property type="term" value="F:nucleic acid binding"/>
    <property type="evidence" value="ECO:0007669"/>
    <property type="project" value="InterPro"/>
</dbReference>
<dbReference type="GO" id="GO:0008310">
    <property type="term" value="F:single-stranded DNA 3'-5' DNA exonuclease activity"/>
    <property type="evidence" value="ECO:0000314"/>
    <property type="project" value="FlyBase"/>
</dbReference>
<dbReference type="GO" id="GO:0045950">
    <property type="term" value="P:negative regulation of mitotic recombination"/>
    <property type="evidence" value="ECO:0000315"/>
    <property type="project" value="FlyBase"/>
</dbReference>
<dbReference type="CDD" id="cd06141">
    <property type="entry name" value="WRN_exo"/>
    <property type="match status" value="1"/>
</dbReference>
<dbReference type="FunFam" id="3.30.420.10:FF:000104">
    <property type="entry name" value="Werner Syndrome-like exonuclease"/>
    <property type="match status" value="1"/>
</dbReference>
<dbReference type="Gene3D" id="3.30.420.10">
    <property type="entry name" value="Ribonuclease H-like superfamily/Ribonuclease H"/>
    <property type="match status" value="1"/>
</dbReference>
<dbReference type="InterPro" id="IPR002562">
    <property type="entry name" value="3'-5'_exonuclease_dom"/>
</dbReference>
<dbReference type="InterPro" id="IPR051132">
    <property type="entry name" value="3-5_Exonuclease_domain"/>
</dbReference>
<dbReference type="InterPro" id="IPR012337">
    <property type="entry name" value="RNaseH-like_sf"/>
</dbReference>
<dbReference type="InterPro" id="IPR036397">
    <property type="entry name" value="RNaseH_sf"/>
</dbReference>
<dbReference type="PANTHER" id="PTHR13620:SF109">
    <property type="entry name" value="3'-5' EXONUCLEASE"/>
    <property type="match status" value="1"/>
</dbReference>
<dbReference type="PANTHER" id="PTHR13620">
    <property type="entry name" value="3-5 EXONUCLEASE"/>
    <property type="match status" value="1"/>
</dbReference>
<dbReference type="Pfam" id="PF01612">
    <property type="entry name" value="DNA_pol_A_exo1"/>
    <property type="match status" value="1"/>
</dbReference>
<dbReference type="SMART" id="SM00474">
    <property type="entry name" value="35EXOc"/>
    <property type="match status" value="1"/>
</dbReference>
<dbReference type="SUPFAM" id="SSF53098">
    <property type="entry name" value="Ribonuclease H-like"/>
    <property type="match status" value="1"/>
</dbReference>
<evidence type="ECO:0000250" key="1">
    <source>
        <dbReference type="UniProtKB" id="Q14191"/>
    </source>
</evidence>
<evidence type="ECO:0000255" key="2"/>
<evidence type="ECO:0000256" key="3">
    <source>
        <dbReference type="SAM" id="MobiDB-lite"/>
    </source>
</evidence>
<evidence type="ECO:0000269" key="4">
    <source>
    </source>
</evidence>
<evidence type="ECO:0000269" key="5">
    <source>
    </source>
</evidence>
<evidence type="ECO:0000269" key="6">
    <source>
    </source>
</evidence>
<evidence type="ECO:0000269" key="7">
    <source>
    </source>
</evidence>
<evidence type="ECO:0000269" key="8">
    <source>
    </source>
</evidence>
<evidence type="ECO:0000303" key="9">
    <source>
    </source>
</evidence>
<evidence type="ECO:0000305" key="10"/>
<evidence type="ECO:0000312" key="11">
    <source>
        <dbReference type="EMBL" id="AAF55541.2"/>
    </source>
</evidence>
<evidence type="ECO:0000312" key="12">
    <source>
        <dbReference type="EMBL" id="AAK93071.1"/>
    </source>
</evidence>
<evidence type="ECO:0000312" key="13">
    <source>
        <dbReference type="EMBL" id="ABS71855.1"/>
    </source>
</evidence>
<evidence type="ECO:0000312" key="14">
    <source>
        <dbReference type="EMBL" id="ACJ13209.1"/>
    </source>
</evidence>
<evidence type="ECO:0000312" key="15">
    <source>
        <dbReference type="FlyBase" id="FBgn0038608"/>
    </source>
</evidence>
<gene>
    <name evidence="15" type="primary">WRNexo</name>
    <name type="ORF">CG7670</name>
</gene>
<organism>
    <name type="scientific">Drosophila melanogaster</name>
    <name type="common">Fruit fly</name>
    <dbReference type="NCBI Taxonomy" id="7227"/>
    <lineage>
        <taxon>Eukaryota</taxon>
        <taxon>Metazoa</taxon>
        <taxon>Ecdysozoa</taxon>
        <taxon>Arthropoda</taxon>
        <taxon>Hexapoda</taxon>
        <taxon>Insecta</taxon>
        <taxon>Pterygota</taxon>
        <taxon>Neoptera</taxon>
        <taxon>Endopterygota</taxon>
        <taxon>Diptera</taxon>
        <taxon>Brachycera</taxon>
        <taxon>Muscomorpha</taxon>
        <taxon>Ephydroidea</taxon>
        <taxon>Drosophilidae</taxon>
        <taxon>Drosophila</taxon>
        <taxon>Sophophora</taxon>
    </lineage>
</organism>
<keyword id="KW-0269">Exonuclease</keyword>
<keyword id="KW-0378">Hydrolase</keyword>
<keyword id="KW-0460">Magnesium</keyword>
<keyword id="KW-0479">Metal-binding</keyword>
<keyword id="KW-0540">Nuclease</keyword>
<keyword id="KW-0539">Nucleus</keyword>
<keyword id="KW-0597">Phosphoprotein</keyword>
<keyword id="KW-1185">Reference proteome</keyword>
<feature type="chain" id="PRO_0000399376" description="3'-5' exonuclease">
    <location>
        <begin position="1"/>
        <end position="353"/>
    </location>
</feature>
<feature type="domain" description="3'-5' exonuclease" evidence="2">
    <location>
        <begin position="145"/>
        <end position="313"/>
    </location>
</feature>
<feature type="region of interest" description="Disordered" evidence="3">
    <location>
        <begin position="1"/>
        <end position="119"/>
    </location>
</feature>
<feature type="compositionally biased region" description="Basic and acidic residues" evidence="3">
    <location>
        <begin position="13"/>
        <end position="30"/>
    </location>
</feature>
<feature type="compositionally biased region" description="Basic and acidic residues" evidence="3">
    <location>
        <begin position="37"/>
        <end position="50"/>
    </location>
</feature>
<feature type="compositionally biased region" description="Basic residues" evidence="3">
    <location>
        <begin position="59"/>
        <end position="70"/>
    </location>
</feature>
<feature type="compositionally biased region" description="Basic and acidic residues" evidence="3">
    <location>
        <begin position="71"/>
        <end position="90"/>
    </location>
</feature>
<feature type="binding site" evidence="8">
    <location>
        <position position="162"/>
    </location>
    <ligand>
        <name>Mg(2+)</name>
        <dbReference type="ChEBI" id="CHEBI:18420"/>
        <label>1</label>
        <note>catalytic</note>
    </ligand>
</feature>
<feature type="binding site" evidence="8">
    <location>
        <position position="162"/>
    </location>
    <ligand>
        <name>Mg(2+)</name>
        <dbReference type="ChEBI" id="CHEBI:18420"/>
        <label>2</label>
        <note>catalytic</note>
    </ligand>
</feature>
<feature type="binding site" evidence="8">
    <location>
        <position position="164"/>
    </location>
    <ligand>
        <name>Mg(2+)</name>
        <dbReference type="ChEBI" id="CHEBI:18420"/>
        <label>1</label>
        <note>catalytic</note>
    </ligand>
</feature>
<feature type="binding site" evidence="1">
    <location>
        <position position="300"/>
    </location>
    <ligand>
        <name>Mg(2+)</name>
        <dbReference type="ChEBI" id="CHEBI:18420"/>
        <label>1</label>
        <note>catalytic</note>
    </ligand>
</feature>
<feature type="modified residue" description="Phosphoserine" evidence="6">
    <location>
        <position position="103"/>
    </location>
</feature>
<feature type="modified residue" description="Phosphoserine" evidence="6">
    <location>
        <position position="109"/>
    </location>
</feature>
<feature type="modified residue" description="Phosphoserine" evidence="6">
    <location>
        <position position="111"/>
    </location>
</feature>
<feature type="mutagenesis site" description="Completely lacks exonuclease activity, when associated with A-164." evidence="8">
    <original>D</original>
    <variation>A</variation>
    <location>
        <position position="162"/>
    </location>
</feature>
<feature type="mutagenesis site" description="Completely lacks exonuclease activity, when associated with A-162." evidence="8">
    <original>E</original>
    <variation>A</variation>
    <location>
        <position position="164"/>
    </location>
</feature>
<feature type="mutagenesis site" description="20-fold increase in levels of mitotic recombination, very limited 3'-5' exonuclease activity." evidence="8">
    <original>D</original>
    <variation>V</variation>
    <location>
        <position position="229"/>
    </location>
</feature>
<feature type="sequence conflict" description="In Ref. 1; ABS71854." evidence="10" ref="1">
    <original>V</original>
    <variation>VK</variation>
    <location>
        <position position="78"/>
    </location>
</feature>
<feature type="sequence conflict" description="In Ref. 4; AAK93071." evidence="10" ref="4">
    <original>D</original>
    <variation>A</variation>
    <location>
        <position position="154"/>
    </location>
</feature>
<accession>Q9VE86</accession>
<accession>A7L742</accession>
<accession>B6IDR2</accession>
<accession>Q961E1</accession>
<name>WRNXO_DROME</name>
<protein>
    <recommendedName>
        <fullName evidence="9">3'-5' exonuclease</fullName>
        <ecNumber>3.1.11.-</ecNumber>
    </recommendedName>
    <alternativeName>
        <fullName>Werner Syndrome-like exonuclease</fullName>
        <shortName evidence="9">DmWRNexo</shortName>
    </alternativeName>
</protein>
<reference evidence="10 13" key="1">
    <citation type="journal article" date="2008" name="Aging Cell">
        <title>Identification and characterization of a Drosophila ortholog of WRN exonuclease that is required to maintain genome integrity.</title>
        <authorList>
            <person name="Saunders R.D."/>
            <person name="Boubriak I."/>
            <person name="Clancy D.J."/>
            <person name="Cox L.S."/>
        </authorList>
    </citation>
    <scope>NUCLEOTIDE SEQUENCE [MRNA]</scope>
    <scope>FUNCTION</scope>
    <scope>DISRUPTION PHENOTYPE</scope>
</reference>
<reference evidence="11" key="2">
    <citation type="journal article" date="2000" name="Science">
        <title>The genome sequence of Drosophila melanogaster.</title>
        <authorList>
            <person name="Adams M.D."/>
            <person name="Celniker S.E."/>
            <person name="Holt R.A."/>
            <person name="Evans C.A."/>
            <person name="Gocayne J.D."/>
            <person name="Amanatides P.G."/>
            <person name="Scherer S.E."/>
            <person name="Li P.W."/>
            <person name="Hoskins R.A."/>
            <person name="Galle R.F."/>
            <person name="George R.A."/>
            <person name="Lewis S.E."/>
            <person name="Richards S."/>
            <person name="Ashburner M."/>
            <person name="Henderson S.N."/>
            <person name="Sutton G.G."/>
            <person name="Wortman J.R."/>
            <person name="Yandell M.D."/>
            <person name="Zhang Q."/>
            <person name="Chen L.X."/>
            <person name="Brandon R.C."/>
            <person name="Rogers Y.-H.C."/>
            <person name="Blazej R.G."/>
            <person name="Champe M."/>
            <person name="Pfeiffer B.D."/>
            <person name="Wan K.H."/>
            <person name="Doyle C."/>
            <person name="Baxter E.G."/>
            <person name="Helt G."/>
            <person name="Nelson C.R."/>
            <person name="Miklos G.L.G."/>
            <person name="Abril J.F."/>
            <person name="Agbayani A."/>
            <person name="An H.-J."/>
            <person name="Andrews-Pfannkoch C."/>
            <person name="Baldwin D."/>
            <person name="Ballew R.M."/>
            <person name="Basu A."/>
            <person name="Baxendale J."/>
            <person name="Bayraktaroglu L."/>
            <person name="Beasley E.M."/>
            <person name="Beeson K.Y."/>
            <person name="Benos P.V."/>
            <person name="Berman B.P."/>
            <person name="Bhandari D."/>
            <person name="Bolshakov S."/>
            <person name="Borkova D."/>
            <person name="Botchan M.R."/>
            <person name="Bouck J."/>
            <person name="Brokstein P."/>
            <person name="Brottier P."/>
            <person name="Burtis K.C."/>
            <person name="Busam D.A."/>
            <person name="Butler H."/>
            <person name="Cadieu E."/>
            <person name="Center A."/>
            <person name="Chandra I."/>
            <person name="Cherry J.M."/>
            <person name="Cawley S."/>
            <person name="Dahlke C."/>
            <person name="Davenport L.B."/>
            <person name="Davies P."/>
            <person name="de Pablos B."/>
            <person name="Delcher A."/>
            <person name="Deng Z."/>
            <person name="Mays A.D."/>
            <person name="Dew I."/>
            <person name="Dietz S.M."/>
            <person name="Dodson K."/>
            <person name="Doup L.E."/>
            <person name="Downes M."/>
            <person name="Dugan-Rocha S."/>
            <person name="Dunkov B.C."/>
            <person name="Dunn P."/>
            <person name="Durbin K.J."/>
            <person name="Evangelista C.C."/>
            <person name="Ferraz C."/>
            <person name="Ferriera S."/>
            <person name="Fleischmann W."/>
            <person name="Fosler C."/>
            <person name="Gabrielian A.E."/>
            <person name="Garg N.S."/>
            <person name="Gelbart W.M."/>
            <person name="Glasser K."/>
            <person name="Glodek A."/>
            <person name="Gong F."/>
            <person name="Gorrell J.H."/>
            <person name="Gu Z."/>
            <person name="Guan P."/>
            <person name="Harris M."/>
            <person name="Harris N.L."/>
            <person name="Harvey D.A."/>
            <person name="Heiman T.J."/>
            <person name="Hernandez J.R."/>
            <person name="Houck J."/>
            <person name="Hostin D."/>
            <person name="Houston K.A."/>
            <person name="Howland T.J."/>
            <person name="Wei M.-H."/>
            <person name="Ibegwam C."/>
            <person name="Jalali M."/>
            <person name="Kalush F."/>
            <person name="Karpen G.H."/>
            <person name="Ke Z."/>
            <person name="Kennison J.A."/>
            <person name="Ketchum K.A."/>
            <person name="Kimmel B.E."/>
            <person name="Kodira C.D."/>
            <person name="Kraft C.L."/>
            <person name="Kravitz S."/>
            <person name="Kulp D."/>
            <person name="Lai Z."/>
            <person name="Lasko P."/>
            <person name="Lei Y."/>
            <person name="Levitsky A.A."/>
            <person name="Li J.H."/>
            <person name="Li Z."/>
            <person name="Liang Y."/>
            <person name="Lin X."/>
            <person name="Liu X."/>
            <person name="Mattei B."/>
            <person name="McIntosh T.C."/>
            <person name="McLeod M.P."/>
            <person name="McPherson D."/>
            <person name="Merkulov G."/>
            <person name="Milshina N.V."/>
            <person name="Mobarry C."/>
            <person name="Morris J."/>
            <person name="Moshrefi A."/>
            <person name="Mount S.M."/>
            <person name="Moy M."/>
            <person name="Murphy B."/>
            <person name="Murphy L."/>
            <person name="Muzny D.M."/>
            <person name="Nelson D.L."/>
            <person name="Nelson D.R."/>
            <person name="Nelson K.A."/>
            <person name="Nixon K."/>
            <person name="Nusskern D.R."/>
            <person name="Pacleb J.M."/>
            <person name="Palazzolo M."/>
            <person name="Pittman G.S."/>
            <person name="Pan S."/>
            <person name="Pollard J."/>
            <person name="Puri V."/>
            <person name="Reese M.G."/>
            <person name="Reinert K."/>
            <person name="Remington K."/>
            <person name="Saunders R.D.C."/>
            <person name="Scheeler F."/>
            <person name="Shen H."/>
            <person name="Shue B.C."/>
            <person name="Siden-Kiamos I."/>
            <person name="Simpson M."/>
            <person name="Skupski M.P."/>
            <person name="Smith T.J."/>
            <person name="Spier E."/>
            <person name="Spradling A.C."/>
            <person name="Stapleton M."/>
            <person name="Strong R."/>
            <person name="Sun E."/>
            <person name="Svirskas R."/>
            <person name="Tector C."/>
            <person name="Turner R."/>
            <person name="Venter E."/>
            <person name="Wang A.H."/>
            <person name="Wang X."/>
            <person name="Wang Z.-Y."/>
            <person name="Wassarman D.A."/>
            <person name="Weinstock G.M."/>
            <person name="Weissenbach J."/>
            <person name="Williams S.M."/>
            <person name="Woodage T."/>
            <person name="Worley K.C."/>
            <person name="Wu D."/>
            <person name="Yang S."/>
            <person name="Yao Q.A."/>
            <person name="Ye J."/>
            <person name="Yeh R.-F."/>
            <person name="Zaveri J.S."/>
            <person name="Zhan M."/>
            <person name="Zhang G."/>
            <person name="Zhao Q."/>
            <person name="Zheng L."/>
            <person name="Zheng X.H."/>
            <person name="Zhong F.N."/>
            <person name="Zhong W."/>
            <person name="Zhou X."/>
            <person name="Zhu S.C."/>
            <person name="Zhu X."/>
            <person name="Smith H.O."/>
            <person name="Gibbs R.A."/>
            <person name="Myers E.W."/>
            <person name="Rubin G.M."/>
            <person name="Venter J.C."/>
        </authorList>
    </citation>
    <scope>NUCLEOTIDE SEQUENCE [LARGE SCALE GENOMIC DNA]</scope>
    <source>
        <strain>Berkeley</strain>
    </source>
</reference>
<reference evidence="10 11" key="3">
    <citation type="journal article" date="2002" name="Genome Biol.">
        <title>Annotation of the Drosophila melanogaster euchromatic genome: a systematic review.</title>
        <authorList>
            <person name="Misra S."/>
            <person name="Crosby M.A."/>
            <person name="Mungall C.J."/>
            <person name="Matthews B.B."/>
            <person name="Campbell K.S."/>
            <person name="Hradecky P."/>
            <person name="Huang Y."/>
            <person name="Kaminker J.S."/>
            <person name="Millburn G.H."/>
            <person name="Prochnik S.E."/>
            <person name="Smith C.D."/>
            <person name="Tupy J.L."/>
            <person name="Whitfield E.J."/>
            <person name="Bayraktaroglu L."/>
            <person name="Berman B.P."/>
            <person name="Bettencourt B.R."/>
            <person name="Celniker S.E."/>
            <person name="de Grey A.D.N.J."/>
            <person name="Drysdale R.A."/>
            <person name="Harris N.L."/>
            <person name="Richter J."/>
            <person name="Russo S."/>
            <person name="Schroeder A.J."/>
            <person name="Shu S.Q."/>
            <person name="Stapleton M."/>
            <person name="Yamada C."/>
            <person name="Ashburner M."/>
            <person name="Gelbart W.M."/>
            <person name="Rubin G.M."/>
            <person name="Lewis S.E."/>
        </authorList>
    </citation>
    <scope>GENOME REANNOTATION</scope>
    <source>
        <strain>Berkeley</strain>
    </source>
</reference>
<reference evidence="12" key="4">
    <citation type="journal article" date="2002" name="Genome Biol.">
        <title>A Drosophila full-length cDNA resource.</title>
        <authorList>
            <person name="Stapleton M."/>
            <person name="Carlson J.W."/>
            <person name="Brokstein P."/>
            <person name="Yu C."/>
            <person name="Champe M."/>
            <person name="George R.A."/>
            <person name="Guarin H."/>
            <person name="Kronmiller B."/>
            <person name="Pacleb J.M."/>
            <person name="Park S."/>
            <person name="Wan K.H."/>
            <person name="Rubin G.M."/>
            <person name="Celniker S.E."/>
        </authorList>
    </citation>
    <scope>NUCLEOTIDE SEQUENCE [LARGE SCALE MRNA]</scope>
    <source>
        <strain evidence="4">Berkeley</strain>
        <tissue evidence="4">Ovary</tissue>
    </source>
</reference>
<reference evidence="14" key="5">
    <citation type="submission" date="2008-11" db="EMBL/GenBank/DDBJ databases">
        <authorList>
            <person name="Carlson J.W."/>
            <person name="Booth B."/>
            <person name="Frise E."/>
            <person name="Park S."/>
            <person name="Wan K.H."/>
            <person name="Yu C."/>
            <person name="Celniker S.E."/>
        </authorList>
    </citation>
    <scope>NUCLEOTIDE SEQUENCE [LARGE SCALE MRNA]</scope>
    <source>
        <strain>Berkeley</strain>
    </source>
</reference>
<reference key="6">
    <citation type="journal article" date="2007" name="Ann. N. Y. Acad. Sci.">
        <title>Modeling Werner Syndrome in Drosophila melanogaster: hyper-recombination in flies lacking WRN-like exonuclease.</title>
        <authorList>
            <person name="Cox L.S."/>
            <person name="Clancy D.J."/>
            <person name="Boubriak I."/>
            <person name="Saunders R.D."/>
        </authorList>
    </citation>
    <scope>FUNCTION</scope>
</reference>
<reference evidence="10" key="7">
    <citation type="journal article" date="2008" name="J. Proteome Res.">
        <title>Phosphoproteome analysis of Drosophila melanogaster embryos.</title>
        <authorList>
            <person name="Zhai B."/>
            <person name="Villen J."/>
            <person name="Beausoleil S.A."/>
            <person name="Mintseris J."/>
            <person name="Gygi S.P."/>
        </authorList>
    </citation>
    <scope>PHOSPHORYLATION [LARGE SCALE ANALYSIS] AT SER-103; SER-109 AND SER-111</scope>
    <scope>IDENTIFICATION BY MASS SPECTROMETRY</scope>
    <source>
        <tissue evidence="6">Embryo</tissue>
    </source>
</reference>
<reference evidence="10" key="8">
    <citation type="journal article" date="2009" name="Biogerontology">
        <title>DmWRNexo is a 3'-5' exonuclease: phenotypic and biochemical characterization of mutants of the Drosophila orthologue of human WRN exonuclease.</title>
        <authorList>
            <person name="Boubriak I."/>
            <person name="Mason P.A."/>
            <person name="Clancy D.J."/>
            <person name="Dockray J."/>
            <person name="Saunders R.D."/>
            <person name="Cox L.S."/>
        </authorList>
    </citation>
    <scope>FUNCTION</scope>
    <scope>SUBCELLULAR LOCATION</scope>
    <scope>DISRUPTION PHENOTYPE</scope>
    <scope>MUTAGENESIS OF ASP-162; GLU-164 AND ASP-229</scope>
</reference>
<proteinExistence type="evidence at protein level"/>
<comment type="function">
    <text evidence="5 7 8">Has exonuclease activity on both single-stranded and duplex templates bearing overhangs, but not blunt ended duplex DNA, and cleaves in a 3'-5' direction (PubMed:18056975, PubMed:18346216, PubMed:18956248). Essential for the formation of DNA replication focal centers (PubMed:18346216, PubMed:18956248). Has an important role in maintaining genome stability (PubMed:18346216, PubMed:18956248).</text>
</comment>
<comment type="subcellular location">
    <subcellularLocation>
        <location evidence="8">Nucleus</location>
    </subcellularLocation>
</comment>
<comment type="disruption phenotype">
    <text evidence="7 8">Females are sterile. Hypersensitive to the topoisomerase I inhibitor camptothecin. Highly elevated rates of mitotic DNA recombination resulting from excessive reciprocal exchange.</text>
</comment>
<comment type="similarity">
    <text evidence="10">Belongs to the WRNexo family.</text>
</comment>
<comment type="sequence caution" evidence="10">
    <conflict type="erroneous initiation">
        <sequence resource="EMBL-CDS" id="ACJ13209"/>
    </conflict>
    <text>Extended N-terminus.</text>
</comment>
<sequence>MEKYLTKMPIKSKANEVPKEEAGVKKETPKVARKATKKDTPKELKDKENAGDDNTPKQTKGRPGRPAAKRKNLDTPDVTEKLAMEEENPPKRRSSRLTRSTRSMAEDGSPSPEKEKPEKLPFIKYKGAIKYFTESQDIAASADDVLQWVEKQKDEVVPMAFDMEWPFSFQTGPGKSAVIQICVDEKCCYIYQLTNVKKLPAALVALINHPKVRLHGVNIKNDFRKLARDFPEVTAEPLIEKCVDLGLWCNEVCETGGRWSLERLTNFIAKKAMDKSKKVRMSKWHVIPLDENQLMYAAIDVYIGQVIYRELERREKVKIKNEEEFKEKNGDAAFKAMKALGETFLTKINEVTL</sequence>